<name>GLD2B_XENLA</name>
<gene>
    <name evidence="2" type="primary">tent2-b</name>
    <name type="synonym">gld2-b</name>
    <name type="synonym">papd4-b</name>
</gene>
<comment type="function">
    <text evidence="1 4 5 6">Cytoplasmic poly(A) RNA polymerase that adds successive AMP monomers to the 3'-end of specific RNAs, forming a poly(A) tail. In contrast to the canonical nuclear poly(A) RNA polymerase, it only adds poly(A) to selected cytoplasmic mRNAs during oocyte maturation. Plays a central role during oocyte maturation by mediating polyadenylation of dormant mRNAs, which contain 5'AAUAAA-3' sequence in their 3'-UTR. In immature oocytes, polyadenylation of poly(A) tails is counteracted by the ribonuclease parn. During maturation parn is excluded from the ribonucleoprotein complex, allowing poly(A) elongation and activation of mRNAs. May not play a role in replication-dependent histone mRNA degradation (By similarity).</text>
</comment>
<comment type="catalytic activity">
    <reaction evidence="5">
        <text>RNA(n) + ATP = RNA(n)-3'-adenine ribonucleotide + diphosphate</text>
        <dbReference type="Rhea" id="RHEA:11332"/>
        <dbReference type="Rhea" id="RHEA-COMP:14527"/>
        <dbReference type="Rhea" id="RHEA-COMP:17347"/>
        <dbReference type="ChEBI" id="CHEBI:30616"/>
        <dbReference type="ChEBI" id="CHEBI:33019"/>
        <dbReference type="ChEBI" id="CHEBI:140395"/>
        <dbReference type="ChEBI" id="CHEBI:173115"/>
        <dbReference type="EC" id="2.7.7.19"/>
    </reaction>
</comment>
<comment type="cofactor">
    <cofactor evidence="1">
        <name>Mg(2+)</name>
        <dbReference type="ChEBI" id="CHEBI:18420"/>
    </cofactor>
    <cofactor evidence="1">
        <name>Mn(2+)</name>
        <dbReference type="ChEBI" id="CHEBI:29035"/>
    </cofactor>
</comment>
<comment type="subunit">
    <text evidence="1">Component of a complex at least composed of cpeb1, cpsf1, tent2/gld2, pabpc1/ePAB, parn and sympk. Following oocyte maturation, parn is expelled from the complex. Interacts with rbfox2. Interacts with sympk (By similarity).</text>
</comment>
<comment type="subcellular location">
    <subcellularLocation>
        <location evidence="4 5">Cytoplasm</location>
    </subcellularLocation>
</comment>
<comment type="alternative products">
    <event type="alternative splicing"/>
    <isoform>
        <id>Q6DFA8-1</id>
        <name>1</name>
        <sequence type="displayed"/>
    </isoform>
    <isoform>
        <id>Q6DFA8-2</id>
        <name>2</name>
        <sequence type="described" ref="VSP_034326"/>
    </isoform>
</comment>
<comment type="developmental stage">
    <text evidence="5">Present in oocytes.</text>
</comment>
<comment type="induction">
    <text evidence="7">Autoregulated; mediates its own polyadenylation and translational activation during frog oocyte maturation.</text>
</comment>
<comment type="similarity">
    <text evidence="9">Belongs to the DNA polymerase type-B-like family. GLD2 subfamily.</text>
</comment>
<reference key="1">
    <citation type="journal article" date="2004" name="Cell">
        <title>Symplekin and xGLD-2 are required for CPEB-mediated cytoplasmic polyadenylation.</title>
        <authorList>
            <person name="Barnard D.C."/>
            <person name="Ryan K."/>
            <person name="Manley J.L."/>
            <person name="Richter J.D."/>
        </authorList>
    </citation>
    <scope>NUCLEOTIDE SEQUENCE [MRNA] (ISOFORM 1)</scope>
    <scope>FUNCTION</scope>
    <scope>SUBCELLULAR LOCATION</scope>
    <scope>INTERACTION WITH CPEB1; CPSF1 AND SYMPK</scope>
    <scope>MUTAGENESIS OF ASP-242</scope>
    <source>
        <tissue>Oocyte</tissue>
    </source>
</reference>
<reference key="2">
    <citation type="journal article" date="2008" name="FEBS J.">
        <title>Xenopus Rbm9 is a novel interactor of XGld2 in the cytoplasmic polyadenylation complex.</title>
        <authorList>
            <person name="Papin C."/>
            <person name="Rouget C."/>
            <person name="Mandart E."/>
        </authorList>
    </citation>
    <scope>NUCLEOTIDE SEQUENCE [MRNA] (ISOFORM 2)</scope>
    <scope>INTERACTION WITH RBFOX2</scope>
    <source>
        <tissue>Oocyte</tissue>
    </source>
</reference>
<reference key="3">
    <citation type="submission" date="2004-07" db="EMBL/GenBank/DDBJ databases">
        <authorList>
            <consortium name="NIH - Xenopus Gene Collection (XGC) project"/>
        </authorList>
    </citation>
    <scope>NUCLEOTIDE SEQUENCE [LARGE SCALE MRNA] (ISOFORM 1)</scope>
    <source>
        <tissue>Oocyte</tissue>
    </source>
</reference>
<reference key="4">
    <citation type="journal article" date="2005" name="RNA">
        <title>Vertebrate GLD2 poly(A) polymerases in the germline and the brain.</title>
        <authorList>
            <person name="Rouhana L."/>
            <person name="Wang L."/>
            <person name="Buter N."/>
            <person name="Kwak J.E."/>
            <person name="Schiltz C.A."/>
            <person name="Gonzalez T."/>
            <person name="Kelley A.E."/>
            <person name="Landry C.F."/>
            <person name="Wickens M."/>
        </authorList>
    </citation>
    <scope>FUNCTION</scope>
    <scope>ENZYME ACTIVITY</scope>
    <scope>SUBCELLULAR LOCATION</scope>
    <scope>DEVELOPMENTAL STAGE</scope>
</reference>
<reference key="5">
    <citation type="journal article" date="2006" name="Mol. Cell">
        <title>Opposing polymerase-deadenylase activities regulate cytoplasmic polyadenylation.</title>
        <authorList>
            <person name="Kim J.H."/>
            <person name="Richter J.D."/>
        </authorList>
    </citation>
    <scope>FUNCTION</scope>
    <scope>INTERACTION WITH PARN</scope>
</reference>
<reference key="6">
    <citation type="journal article" date="2007" name="Genes Dev.">
        <title>RINGO/cdk1 and CPEB mediate poly(A) tail stabilization and translational regulation by ePAB.</title>
        <authorList>
            <person name="Kim J.H."/>
            <person name="Richter J.D."/>
        </authorList>
    </citation>
    <scope>INTERACTION WITH PABPC1</scope>
</reference>
<reference key="7">
    <citation type="journal article" date="2007" name="RNA">
        <title>Autoregulation of GLD-2 cytoplasmic poly(A) polymerase.</title>
        <authorList>
            <person name="Rouhana L."/>
            <person name="Wickens M."/>
        </authorList>
    </citation>
    <scope>INDUCTION</scope>
</reference>
<sequence>MYPNSPSLGRIPLPLPCARQQQTSAYLSKVPVSVAPDLLSPEQFFQASLNIHKNANLPRLLMNGNVLTVPPLSSPPWSYLNHSPLISPGSPPSSFQNRKRRSDEGNSPYDVKRQRFQSPQEQTVNHQAVPLRGDIRCSYPGSPAFPLLQSPSPPVLKGHSSNSGDCWLYDHIDTTLPVAKDKLSKQILDLFQALQQQVCDLKKKDICRAELQREIQQIFPQSRLYLVGSSLNGFGIRSSDADLCLVLKEEPMNQNTEARHILSLLHKHFYTRLSYIERPQFIRAKVPIVKFRDKVSGAEFDLNVNNVVGIRNTFLLRTYAYLDKRVRPLVLVIKKWANHHGINDASRGTLSSYTIVLMVLHYLQTLPEPILPSLQKKYPECFDRTMQLHLVHQAPRNIPQFLSKNETPLGDLLLGFLKYFAVEFDWSKDIISLREAKALPRTDDYEWRNKYICVEEPFDGSNTARAVYEKQKFDLIRAEFLKAWVALRDNRDLYSLLPVKGIMKKMHSL</sequence>
<dbReference type="EC" id="2.7.7.19"/>
<dbReference type="EMBL" id="AY655140">
    <property type="protein sequence ID" value="AAT98005.1"/>
    <property type="molecule type" value="mRNA"/>
</dbReference>
<dbReference type="EMBL" id="AM419010">
    <property type="protein sequence ID" value="CAL91353.1"/>
    <property type="molecule type" value="mRNA"/>
</dbReference>
<dbReference type="EMBL" id="BC076832">
    <property type="protein sequence ID" value="AAH76832.1"/>
    <property type="molecule type" value="mRNA"/>
</dbReference>
<dbReference type="RefSeq" id="NP_001086580.1">
    <molecule id="Q6DFA8-1"/>
    <property type="nucleotide sequence ID" value="NM_001093111.1"/>
</dbReference>
<dbReference type="RefSeq" id="NP_001087078.1">
    <property type="nucleotide sequence ID" value="NM_001093609.1"/>
</dbReference>
<dbReference type="SMR" id="Q6DFA8"/>
<dbReference type="IntAct" id="Q6DFA8">
    <property type="interactions" value="1"/>
</dbReference>
<dbReference type="MINT" id="Q6DFA8"/>
<dbReference type="DNASU" id="446415"/>
<dbReference type="GeneID" id="446415"/>
<dbReference type="GeneID" id="446914"/>
<dbReference type="KEGG" id="xla:446415"/>
<dbReference type="CTD" id="446415"/>
<dbReference type="CTD" id="446914"/>
<dbReference type="OMA" id="YATEFXP"/>
<dbReference type="OrthoDB" id="2274644at2759"/>
<dbReference type="Proteomes" id="UP000186698">
    <property type="component" value="Chromosome 1L"/>
</dbReference>
<dbReference type="Bgee" id="446415">
    <property type="expression patterns" value="Expressed in egg cell and 19 other cell types or tissues"/>
</dbReference>
<dbReference type="GO" id="GO:0005737">
    <property type="term" value="C:cytoplasm"/>
    <property type="evidence" value="ECO:0007669"/>
    <property type="project" value="UniProtKB-SubCell"/>
</dbReference>
<dbReference type="GO" id="GO:0005524">
    <property type="term" value="F:ATP binding"/>
    <property type="evidence" value="ECO:0007669"/>
    <property type="project" value="UniProtKB-KW"/>
</dbReference>
<dbReference type="GO" id="GO:0046872">
    <property type="term" value="F:metal ion binding"/>
    <property type="evidence" value="ECO:0007669"/>
    <property type="project" value="UniProtKB-KW"/>
</dbReference>
<dbReference type="GO" id="GO:1990817">
    <property type="term" value="F:poly(A) RNA polymerase activity"/>
    <property type="evidence" value="ECO:0000250"/>
    <property type="project" value="UniProtKB"/>
</dbReference>
<dbReference type="GO" id="GO:0006397">
    <property type="term" value="P:mRNA processing"/>
    <property type="evidence" value="ECO:0007669"/>
    <property type="project" value="UniProtKB-KW"/>
</dbReference>
<dbReference type="GO" id="GO:2000626">
    <property type="term" value="P:negative regulation of miRNA catabolic process"/>
    <property type="evidence" value="ECO:0000250"/>
    <property type="project" value="UniProtKB"/>
</dbReference>
<dbReference type="GO" id="GO:0048477">
    <property type="term" value="P:oogenesis"/>
    <property type="evidence" value="ECO:0007669"/>
    <property type="project" value="UniProtKB-KW"/>
</dbReference>
<dbReference type="GO" id="GO:0031123">
    <property type="term" value="P:RNA 3'-end processing"/>
    <property type="evidence" value="ECO:0000318"/>
    <property type="project" value="GO_Central"/>
</dbReference>
<dbReference type="CDD" id="cd05402">
    <property type="entry name" value="NT_PAP_TUTase"/>
    <property type="match status" value="1"/>
</dbReference>
<dbReference type="FunFam" id="1.10.1410.10:FF:000007">
    <property type="entry name" value="poly(A) RNA polymerase GLD2 isoform X1"/>
    <property type="match status" value="1"/>
</dbReference>
<dbReference type="FunFam" id="3.30.460.10:FF:000022">
    <property type="entry name" value="poly(A) RNA polymerase GLD2 isoform X1"/>
    <property type="match status" value="1"/>
</dbReference>
<dbReference type="Gene3D" id="1.10.1410.10">
    <property type="match status" value="1"/>
</dbReference>
<dbReference type="Gene3D" id="3.30.460.10">
    <property type="entry name" value="Beta Polymerase, domain 2"/>
    <property type="match status" value="1"/>
</dbReference>
<dbReference type="InterPro" id="IPR054708">
    <property type="entry name" value="MTPAP-like_central"/>
</dbReference>
<dbReference type="InterPro" id="IPR043519">
    <property type="entry name" value="NT_sf"/>
</dbReference>
<dbReference type="InterPro" id="IPR002058">
    <property type="entry name" value="PAP_assoc"/>
</dbReference>
<dbReference type="PANTHER" id="PTHR12271">
    <property type="entry name" value="POLY A POLYMERASE CID PAP -RELATED"/>
    <property type="match status" value="1"/>
</dbReference>
<dbReference type="PANTHER" id="PTHR12271:SF40">
    <property type="entry name" value="POLY(A) RNA POLYMERASE GLD2"/>
    <property type="match status" value="1"/>
</dbReference>
<dbReference type="Pfam" id="PF22600">
    <property type="entry name" value="MTPAP-like_central"/>
    <property type="match status" value="1"/>
</dbReference>
<dbReference type="Pfam" id="PF03828">
    <property type="entry name" value="PAP_assoc"/>
    <property type="match status" value="1"/>
</dbReference>
<dbReference type="SUPFAM" id="SSF81301">
    <property type="entry name" value="Nucleotidyltransferase"/>
    <property type="match status" value="1"/>
</dbReference>
<dbReference type="SUPFAM" id="SSF81631">
    <property type="entry name" value="PAP/OAS1 substrate-binding domain"/>
    <property type="match status" value="1"/>
</dbReference>
<organism>
    <name type="scientific">Xenopus laevis</name>
    <name type="common">African clawed frog</name>
    <dbReference type="NCBI Taxonomy" id="8355"/>
    <lineage>
        <taxon>Eukaryota</taxon>
        <taxon>Metazoa</taxon>
        <taxon>Chordata</taxon>
        <taxon>Craniata</taxon>
        <taxon>Vertebrata</taxon>
        <taxon>Euteleostomi</taxon>
        <taxon>Amphibia</taxon>
        <taxon>Batrachia</taxon>
        <taxon>Anura</taxon>
        <taxon>Pipoidea</taxon>
        <taxon>Pipidae</taxon>
        <taxon>Xenopodinae</taxon>
        <taxon>Xenopus</taxon>
        <taxon>Xenopus</taxon>
    </lineage>
</organism>
<keyword id="KW-0025">Alternative splicing</keyword>
<keyword id="KW-0067">ATP-binding</keyword>
<keyword id="KW-0963">Cytoplasm</keyword>
<keyword id="KW-0217">Developmental protein</keyword>
<keyword id="KW-0221">Differentiation</keyword>
<keyword id="KW-0460">Magnesium</keyword>
<keyword id="KW-0464">Manganese</keyword>
<keyword id="KW-0479">Metal-binding</keyword>
<keyword id="KW-0507">mRNA processing</keyword>
<keyword id="KW-0547">Nucleotide-binding</keyword>
<keyword id="KW-0896">Oogenesis</keyword>
<keyword id="KW-1185">Reference proteome</keyword>
<keyword id="KW-0808">Transferase</keyword>
<protein>
    <recommendedName>
        <fullName evidence="9">Poly(A) RNA polymerase GLD2-B</fullName>
        <shortName>xGLD-2</shortName>
        <ecNumber>2.7.7.19</ecNumber>
    </recommendedName>
    <alternativeName>
        <fullName>PAP-associated domain-containing protein 4-B</fullName>
    </alternativeName>
</protein>
<feature type="chain" id="PRO_0000341554" description="Poly(A) RNA polymerase GLD2-B">
    <location>
        <begin position="1"/>
        <end position="509"/>
    </location>
</feature>
<feature type="domain" description="PAP-associated">
    <location>
        <begin position="409"/>
        <end position="462"/>
    </location>
</feature>
<feature type="region of interest" description="Disordered" evidence="3">
    <location>
        <begin position="88"/>
        <end position="125"/>
    </location>
</feature>
<feature type="compositionally biased region" description="Polar residues" evidence="3">
    <location>
        <begin position="116"/>
        <end position="125"/>
    </location>
</feature>
<feature type="binding site" evidence="1">
    <location>
        <position position="240"/>
    </location>
    <ligand>
        <name>Mg(2+)</name>
        <dbReference type="ChEBI" id="CHEBI:18420"/>
        <note>catalytic</note>
    </ligand>
</feature>
<feature type="binding site" evidence="1">
    <location>
        <position position="242"/>
    </location>
    <ligand>
        <name>Mg(2+)</name>
        <dbReference type="ChEBI" id="CHEBI:18420"/>
        <note>catalytic</note>
    </ligand>
</feature>
<feature type="splice variant" id="VSP_034326" description="In isoform 2." evidence="8">
    <location>
        <begin position="56"/>
        <end position="98"/>
    </location>
</feature>
<feature type="mutagenesis site" description="Loss of activity." evidence="4">
    <original>D</original>
    <variation>A</variation>
    <location>
        <position position="242"/>
    </location>
</feature>
<feature type="sequence conflict" description="In Ref. 1; AAT98005." evidence="9" ref="1">
    <original>S</original>
    <variation>T</variation>
    <location>
        <position position="28"/>
    </location>
</feature>
<feature type="sequence conflict" description="In Ref. 1; AAT98005." evidence="9" ref="1">
    <original>G</original>
    <variation>S</variation>
    <location>
        <position position="133"/>
    </location>
</feature>
<feature type="sequence conflict" description="In Ref. 1; AAT98005." evidence="9" ref="1">
    <original>K</original>
    <variation>R</variation>
    <location>
        <position position="376"/>
    </location>
</feature>
<feature type="sequence conflict" description="In Ref. 1; AAT98005." evidence="9" ref="1">
    <original>I</original>
    <variation>V</variation>
    <location>
        <position position="430"/>
    </location>
</feature>
<proteinExistence type="evidence at protein level"/>
<accession>Q6DFA8</accession>
<accession>A4F5G9</accession>
<accession>Q68PF4</accession>
<evidence type="ECO:0000250" key="1"/>
<evidence type="ECO:0000250" key="2">
    <source>
        <dbReference type="UniProtKB" id="Q6PIY7"/>
    </source>
</evidence>
<evidence type="ECO:0000256" key="3">
    <source>
        <dbReference type="SAM" id="MobiDB-lite"/>
    </source>
</evidence>
<evidence type="ECO:0000269" key="4">
    <source>
    </source>
</evidence>
<evidence type="ECO:0000269" key="5">
    <source>
    </source>
</evidence>
<evidence type="ECO:0000269" key="6">
    <source>
    </source>
</evidence>
<evidence type="ECO:0000269" key="7">
    <source>
    </source>
</evidence>
<evidence type="ECO:0000303" key="8">
    <source>
    </source>
</evidence>
<evidence type="ECO:0000305" key="9"/>